<evidence type="ECO:0000255" key="1">
    <source>
        <dbReference type="HAMAP-Rule" id="MF_01342"/>
    </source>
</evidence>
<evidence type="ECO:0000305" key="2"/>
<sequence>MLQPKRTKFRKQFKGRIHGVAKGGTELNFGEFGLKAVEPERVTARQIEAARRALTRHMKRAGRVWIRVFPDVPVSAKPTEVRMGKGKGAPEYWAARIKPGRIMFEIDGVSVETAREALTLAAAKLPIKTRFIQRIAE</sequence>
<reference key="1">
    <citation type="submission" date="2007-07" db="EMBL/GenBank/DDBJ databases">
        <title>Complete sequence of chromosome of Xanthobacter autotrophicus Py2.</title>
        <authorList>
            <consortium name="US DOE Joint Genome Institute"/>
            <person name="Copeland A."/>
            <person name="Lucas S."/>
            <person name="Lapidus A."/>
            <person name="Barry K."/>
            <person name="Glavina del Rio T."/>
            <person name="Hammon N."/>
            <person name="Israni S."/>
            <person name="Dalin E."/>
            <person name="Tice H."/>
            <person name="Pitluck S."/>
            <person name="Sims D."/>
            <person name="Brettin T."/>
            <person name="Bruce D."/>
            <person name="Detter J.C."/>
            <person name="Han C."/>
            <person name="Tapia R."/>
            <person name="Brainard J."/>
            <person name="Schmutz J."/>
            <person name="Larimer F."/>
            <person name="Land M."/>
            <person name="Hauser L."/>
            <person name="Kyrpides N."/>
            <person name="Kim E."/>
            <person name="Ensigns S.A."/>
            <person name="Richardson P."/>
        </authorList>
    </citation>
    <scope>NUCLEOTIDE SEQUENCE [LARGE SCALE GENOMIC DNA]</scope>
    <source>
        <strain>ATCC BAA-1158 / Py2</strain>
    </source>
</reference>
<comment type="function">
    <text evidence="1">Binds 23S rRNA and is also seen to make contacts with the A and possibly P site tRNAs.</text>
</comment>
<comment type="subunit">
    <text evidence="1">Part of the 50S ribosomal subunit.</text>
</comment>
<comment type="similarity">
    <text evidence="1">Belongs to the universal ribosomal protein uL16 family.</text>
</comment>
<accession>A7IFY8</accession>
<dbReference type="EMBL" id="CP000781">
    <property type="protein sequence ID" value="ABS66931.1"/>
    <property type="molecule type" value="Genomic_DNA"/>
</dbReference>
<dbReference type="SMR" id="A7IFY8"/>
<dbReference type="STRING" id="78245.Xaut_1686"/>
<dbReference type="KEGG" id="xau:Xaut_1686"/>
<dbReference type="eggNOG" id="COG0197">
    <property type="taxonomic scope" value="Bacteria"/>
</dbReference>
<dbReference type="HOGENOM" id="CLU_078858_2_1_5"/>
<dbReference type="OrthoDB" id="9802589at2"/>
<dbReference type="PhylomeDB" id="A7IFY8"/>
<dbReference type="Proteomes" id="UP000002417">
    <property type="component" value="Chromosome"/>
</dbReference>
<dbReference type="GO" id="GO:0022625">
    <property type="term" value="C:cytosolic large ribosomal subunit"/>
    <property type="evidence" value="ECO:0007669"/>
    <property type="project" value="TreeGrafter"/>
</dbReference>
<dbReference type="GO" id="GO:0019843">
    <property type="term" value="F:rRNA binding"/>
    <property type="evidence" value="ECO:0007669"/>
    <property type="project" value="UniProtKB-UniRule"/>
</dbReference>
<dbReference type="GO" id="GO:0003735">
    <property type="term" value="F:structural constituent of ribosome"/>
    <property type="evidence" value="ECO:0007669"/>
    <property type="project" value="InterPro"/>
</dbReference>
<dbReference type="GO" id="GO:0000049">
    <property type="term" value="F:tRNA binding"/>
    <property type="evidence" value="ECO:0007669"/>
    <property type="project" value="UniProtKB-KW"/>
</dbReference>
<dbReference type="GO" id="GO:0006412">
    <property type="term" value="P:translation"/>
    <property type="evidence" value="ECO:0007669"/>
    <property type="project" value="UniProtKB-UniRule"/>
</dbReference>
<dbReference type="CDD" id="cd01433">
    <property type="entry name" value="Ribosomal_L16_L10e"/>
    <property type="match status" value="1"/>
</dbReference>
<dbReference type="FunFam" id="3.90.1170.10:FF:000001">
    <property type="entry name" value="50S ribosomal protein L16"/>
    <property type="match status" value="1"/>
</dbReference>
<dbReference type="Gene3D" id="3.90.1170.10">
    <property type="entry name" value="Ribosomal protein L10e/L16"/>
    <property type="match status" value="1"/>
</dbReference>
<dbReference type="HAMAP" id="MF_01342">
    <property type="entry name" value="Ribosomal_uL16"/>
    <property type="match status" value="1"/>
</dbReference>
<dbReference type="InterPro" id="IPR047873">
    <property type="entry name" value="Ribosomal_uL16"/>
</dbReference>
<dbReference type="InterPro" id="IPR000114">
    <property type="entry name" value="Ribosomal_uL16_bact-type"/>
</dbReference>
<dbReference type="InterPro" id="IPR020798">
    <property type="entry name" value="Ribosomal_uL16_CS"/>
</dbReference>
<dbReference type="InterPro" id="IPR016180">
    <property type="entry name" value="Ribosomal_uL16_dom"/>
</dbReference>
<dbReference type="InterPro" id="IPR036920">
    <property type="entry name" value="Ribosomal_uL16_sf"/>
</dbReference>
<dbReference type="NCBIfam" id="TIGR01164">
    <property type="entry name" value="rplP_bact"/>
    <property type="match status" value="1"/>
</dbReference>
<dbReference type="PANTHER" id="PTHR12220">
    <property type="entry name" value="50S/60S RIBOSOMAL PROTEIN L16"/>
    <property type="match status" value="1"/>
</dbReference>
<dbReference type="PANTHER" id="PTHR12220:SF13">
    <property type="entry name" value="LARGE RIBOSOMAL SUBUNIT PROTEIN UL16M"/>
    <property type="match status" value="1"/>
</dbReference>
<dbReference type="Pfam" id="PF00252">
    <property type="entry name" value="Ribosomal_L16"/>
    <property type="match status" value="1"/>
</dbReference>
<dbReference type="PRINTS" id="PR00060">
    <property type="entry name" value="RIBOSOMALL16"/>
</dbReference>
<dbReference type="SUPFAM" id="SSF54686">
    <property type="entry name" value="Ribosomal protein L16p/L10e"/>
    <property type="match status" value="1"/>
</dbReference>
<dbReference type="PROSITE" id="PS00586">
    <property type="entry name" value="RIBOSOMAL_L16_1"/>
    <property type="match status" value="1"/>
</dbReference>
<dbReference type="PROSITE" id="PS00701">
    <property type="entry name" value="RIBOSOMAL_L16_2"/>
    <property type="match status" value="1"/>
</dbReference>
<organism>
    <name type="scientific">Xanthobacter autotrophicus (strain ATCC BAA-1158 / Py2)</name>
    <dbReference type="NCBI Taxonomy" id="78245"/>
    <lineage>
        <taxon>Bacteria</taxon>
        <taxon>Pseudomonadati</taxon>
        <taxon>Pseudomonadota</taxon>
        <taxon>Alphaproteobacteria</taxon>
        <taxon>Hyphomicrobiales</taxon>
        <taxon>Xanthobacteraceae</taxon>
        <taxon>Xanthobacter</taxon>
    </lineage>
</organism>
<feature type="chain" id="PRO_1000143052" description="Large ribosomal subunit protein uL16">
    <location>
        <begin position="1"/>
        <end position="137"/>
    </location>
</feature>
<keyword id="KW-1185">Reference proteome</keyword>
<keyword id="KW-0687">Ribonucleoprotein</keyword>
<keyword id="KW-0689">Ribosomal protein</keyword>
<keyword id="KW-0694">RNA-binding</keyword>
<keyword id="KW-0699">rRNA-binding</keyword>
<keyword id="KW-0820">tRNA-binding</keyword>
<proteinExistence type="inferred from homology"/>
<gene>
    <name evidence="1" type="primary">rplP</name>
    <name type="ordered locus">Xaut_1686</name>
</gene>
<name>RL16_XANP2</name>
<protein>
    <recommendedName>
        <fullName evidence="1">Large ribosomal subunit protein uL16</fullName>
    </recommendedName>
    <alternativeName>
        <fullName evidence="2">50S ribosomal protein L16</fullName>
    </alternativeName>
</protein>